<keyword id="KW-0324">Glycolysis</keyword>
<keyword id="KW-0456">Lyase</keyword>
<keyword id="KW-0704">Schiff base</keyword>
<reference key="1">
    <citation type="journal article" date="1995" name="J. Biochem.">
        <title>Structures of cDNAs encoding the muscle-type and non-muscle-type isozymes of lamprey fructose bisphosphate aldolases and the evolution of aldolase genes.</title>
        <authorList>
            <person name="Zhang R."/>
            <person name="Yatsuki H."/>
            <person name="Kusakabe T."/>
            <person name="Iwabe N."/>
            <person name="Miyata T."/>
            <person name="Imai T."/>
            <person name="Yoshida M."/>
            <person name="Hori K."/>
        </authorList>
    </citation>
    <scope>NUCLEOTIDE SEQUENCE [MRNA]</scope>
    <scope>TISSUE SPECIFICITY</scope>
</reference>
<name>ALF2_LETCA</name>
<sequence length="364" mass="38952">MAALYPALTPEQKKELAEIAQRIVSNGKGILAADESTGTMGKRLSAIKVENVDENRRVYRQLLFSSDPSVTKAIGGVIFYEETLYQKTDDGTPFVKLIKDRGIVVGIKVDKGTVPLAGTDGESTTQGLDGLAERCARYKKDGADFAKWRCVLKISKNTPSALAIAENANVLARYASICQQNGLVPIVEPEILPDGDHDLKTCQYVTEKVLAATYKALSDHHVYLEGSLLKPNMVTAGQASKIRCSPQEVAMATVTALRRTVPSAVPGITFLSGGQSEEDASLNLNAINQLPLERPWALSFSYGRALQASVLKAWAGAPANIPAAKKEFEKRAAINGLAAQGKYVPAGSSGSAASESLFIANHNY</sequence>
<dbReference type="EC" id="4.1.2.13"/>
<dbReference type="EMBL" id="D38619">
    <property type="protein sequence ID" value="BAA07607.1"/>
    <property type="molecule type" value="mRNA"/>
</dbReference>
<dbReference type="SMR" id="P53446"/>
<dbReference type="SABIO-RK" id="P53446"/>
<dbReference type="UniPathway" id="UPA00109">
    <property type="reaction ID" value="UER00183"/>
</dbReference>
<dbReference type="GO" id="GO:0004332">
    <property type="term" value="F:fructose-bisphosphate aldolase activity"/>
    <property type="evidence" value="ECO:0007669"/>
    <property type="project" value="UniProtKB-EC"/>
</dbReference>
<dbReference type="GO" id="GO:0006096">
    <property type="term" value="P:glycolytic process"/>
    <property type="evidence" value="ECO:0007669"/>
    <property type="project" value="UniProtKB-UniPathway"/>
</dbReference>
<dbReference type="CDD" id="cd00948">
    <property type="entry name" value="FBP_aldolase_I_a"/>
    <property type="match status" value="1"/>
</dbReference>
<dbReference type="FunFam" id="3.20.20.70:FF:000021">
    <property type="entry name" value="Fructose-bisphosphate aldolase"/>
    <property type="match status" value="1"/>
</dbReference>
<dbReference type="Gene3D" id="3.20.20.70">
    <property type="entry name" value="Aldolase class I"/>
    <property type="match status" value="1"/>
</dbReference>
<dbReference type="InterPro" id="IPR029768">
    <property type="entry name" value="Aldolase_I_AS"/>
</dbReference>
<dbReference type="InterPro" id="IPR013785">
    <property type="entry name" value="Aldolase_TIM"/>
</dbReference>
<dbReference type="InterPro" id="IPR000741">
    <property type="entry name" value="FBA_I"/>
</dbReference>
<dbReference type="NCBIfam" id="NF033379">
    <property type="entry name" value="FrucBisAld_I"/>
    <property type="match status" value="1"/>
</dbReference>
<dbReference type="PANTHER" id="PTHR11627">
    <property type="entry name" value="FRUCTOSE-BISPHOSPHATE ALDOLASE"/>
    <property type="match status" value="1"/>
</dbReference>
<dbReference type="Pfam" id="PF00274">
    <property type="entry name" value="Glycolytic"/>
    <property type="match status" value="1"/>
</dbReference>
<dbReference type="SUPFAM" id="SSF51569">
    <property type="entry name" value="Aldolase"/>
    <property type="match status" value="1"/>
</dbReference>
<dbReference type="PROSITE" id="PS00158">
    <property type="entry name" value="ALDOLASE_CLASS_I"/>
    <property type="match status" value="1"/>
</dbReference>
<comment type="catalytic activity">
    <reaction>
        <text>beta-D-fructose 1,6-bisphosphate = D-glyceraldehyde 3-phosphate + dihydroxyacetone phosphate</text>
        <dbReference type="Rhea" id="RHEA:14729"/>
        <dbReference type="ChEBI" id="CHEBI:32966"/>
        <dbReference type="ChEBI" id="CHEBI:57642"/>
        <dbReference type="ChEBI" id="CHEBI:59776"/>
        <dbReference type="EC" id="4.1.2.13"/>
    </reaction>
</comment>
<comment type="pathway">
    <text>Carbohydrate degradation; glycolysis; D-glyceraldehyde 3-phosphate and glycerone phosphate from D-glucose: step 4/4.</text>
</comment>
<comment type="subunit">
    <text evidence="1">Homotetramer.</text>
</comment>
<comment type="tissue specificity">
    <text evidence="2">Expressed mainly in the liver and also in brain and other tissues, except for the heart muscle.</text>
</comment>
<comment type="similarity">
    <text evidence="3">Belongs to the class I fructose-bisphosphate aldolase family.</text>
</comment>
<feature type="chain" id="PRO_0000216955" description="Fructose-bisphosphate aldolase, non-muscle type">
    <location>
        <begin position="1"/>
        <end position="364"/>
    </location>
</feature>
<feature type="active site" description="Schiff-base intermediate with dihydroxyacetone-P" evidence="1">
    <location>
        <position position="230"/>
    </location>
</feature>
<feature type="binding site" evidence="1">
    <location>
        <position position="56"/>
    </location>
    <ligand>
        <name>substrate</name>
    </ligand>
</feature>
<feature type="binding site" evidence="1">
    <location>
        <position position="147"/>
    </location>
    <ligand>
        <name>substrate</name>
    </ligand>
</feature>
<feature type="site" description="Necessary for preference for fructose 1,6-bisphosphate over fructose 1-phosphate">
    <location>
        <position position="364"/>
    </location>
</feature>
<organism>
    <name type="scientific">Lethenteron camtschaticum</name>
    <name type="common">Japanese lamprey</name>
    <name type="synonym">Lampetra japonica</name>
    <dbReference type="NCBI Taxonomy" id="980415"/>
    <lineage>
        <taxon>Eukaryota</taxon>
        <taxon>Metazoa</taxon>
        <taxon>Chordata</taxon>
        <taxon>Craniata</taxon>
        <taxon>Vertebrata</taxon>
        <taxon>Cyclostomata</taxon>
        <taxon>Hyperoartia</taxon>
        <taxon>Petromyzontiformes</taxon>
        <taxon>Petromyzontidae</taxon>
        <taxon>Lethenteron</taxon>
    </lineage>
</organism>
<protein>
    <recommendedName>
        <fullName>Fructose-bisphosphate aldolase, non-muscle type</fullName>
        <ecNumber>4.1.2.13</ecNumber>
    </recommendedName>
</protein>
<accession>P53446</accession>
<evidence type="ECO:0000250" key="1"/>
<evidence type="ECO:0000269" key="2">
    <source>
    </source>
</evidence>
<evidence type="ECO:0000305" key="3"/>
<proteinExistence type="evidence at transcript level"/>